<evidence type="ECO:0000250" key="1">
    <source>
        <dbReference type="UniProtKB" id="Q3TQF0"/>
    </source>
</evidence>
<evidence type="ECO:0000250" key="2">
    <source>
        <dbReference type="UniProtKB" id="Q5XUX0"/>
    </source>
</evidence>
<evidence type="ECO:0000255" key="3">
    <source>
        <dbReference type="PROSITE-ProRule" id="PRU00080"/>
    </source>
</evidence>
<evidence type="ECO:0000256" key="4">
    <source>
        <dbReference type="SAM" id="MobiDB-lite"/>
    </source>
</evidence>
<evidence type="ECO:0000305" key="5"/>
<gene>
    <name type="primary">fbxo31-a</name>
    <name type="synonym">fbxo31</name>
</gene>
<protein>
    <recommendedName>
        <fullName>F-box only protein 31-A</fullName>
    </recommendedName>
</protein>
<reference key="1">
    <citation type="submission" date="2007-01" db="EMBL/GenBank/DDBJ databases">
        <authorList>
            <consortium name="NIH - Xenopus Gene Collection (XGC) project"/>
        </authorList>
    </citation>
    <scope>NUCLEOTIDE SEQUENCE [LARGE SCALE MRNA]</scope>
    <source>
        <tissue>Ovary</tissue>
    </source>
</reference>
<name>FB31A_XENLA</name>
<keyword id="KW-0131">Cell cycle</keyword>
<keyword id="KW-0963">Cytoplasm</keyword>
<keyword id="KW-0227">DNA damage</keyword>
<keyword id="KW-0479">Metal-binding</keyword>
<keyword id="KW-1185">Reference proteome</keyword>
<keyword id="KW-0833">Ubl conjugation pathway</keyword>
<keyword id="KW-0862">Zinc</keyword>
<proteinExistence type="evidence at transcript level"/>
<sequence length="519" mass="59240">MAMCARLCGVGQSGGCRRRQQRKGAGNDPELEDEEEEDEVRIEAGEAAVTPRRPHSLLLLPPEILVEIFSLLPGTELGGLAQVCSKFRQILTTDTIWKRRCRQEYGVCENLRKLEVTGVSCHDVYVKLLHQYRHILGLWQPDIGPYGGLLNVVVDGLFIIGWMYLPPHDPHVDEAMRMKPVFRIHLMERKDATVECMYGHKGPHNSQIQIVKKDEFSTKCLQTDYHRMSGGRQEEFRTWLREDLGRTLEDIFHEHMQELILMKFIYICQYDNCLTYRRIYHPPSHPEDLLNPGFFKGTYGSHGLEIVMLSFHGTIAKVTKITGDPNVPAGQQTVEVDLTRPVQLPDVEHLRNFDEMSRLILDVQAQIHREQRQTDNEEDDGRGAGPDKAEPAQQPAPLLRPPNEDANGADDDGDGGEQKPPNVQSFVLPAGVMARNEEYPRSCKMCFYGTGLIAGHGFSSPERTPGLFILFDEDRFGFIWLELKSFSLYSRMRDRFQQSEAPSLEAFEEMLQNMQSWTT</sequence>
<comment type="function">
    <text evidence="1 2">Substrate-recognition component of the SCF(FBXO31) protein ligase complex, which specifically mediates the ubiquitination of proteins amidated at their C-terminus in response to oxidative stress, leading to their degradation by the proteasome. Fbxo31 specifically recognizes and binds C-terminal peptides bearing an amide: C-terminal amidation in response to oxidative stress takes place following protein fragmentation. The SCF(FBXO31) also plays a role in G1 arrest following DNA damage by mediating ubiquitination of phosphorylated cyclin-D1 (ccnd1), promoting its degradation by the proteasome, resulting in G1 arrest (By similarity). The SCF(FBXO31) complex is however not a major regulator of ccnd1 stability during the G1/S transition (By similarity).</text>
</comment>
<comment type="pathway">
    <text evidence="2">Protein modification; protein ubiquitination.</text>
</comment>
<comment type="subunit">
    <text evidence="2">Part of a SCF (SKP1-cullin-F-box) protein ligase complex SCF(FBXO31).</text>
</comment>
<comment type="subcellular location">
    <subcellularLocation>
        <location evidence="2">Cytoplasm</location>
    </subcellularLocation>
</comment>
<comment type="domain">
    <text evidence="2">Zinc-binding is required for the structure of the protein and facilitate folding.</text>
</comment>
<comment type="similarity">
    <text evidence="5">Belongs to the FBXO31 family.</text>
</comment>
<organism>
    <name type="scientific">Xenopus laevis</name>
    <name type="common">African clawed frog</name>
    <dbReference type="NCBI Taxonomy" id="8355"/>
    <lineage>
        <taxon>Eukaryota</taxon>
        <taxon>Metazoa</taxon>
        <taxon>Chordata</taxon>
        <taxon>Craniata</taxon>
        <taxon>Vertebrata</taxon>
        <taxon>Euteleostomi</taxon>
        <taxon>Amphibia</taxon>
        <taxon>Batrachia</taxon>
        <taxon>Anura</taxon>
        <taxon>Pipoidea</taxon>
        <taxon>Pipidae</taxon>
        <taxon>Xenopodinae</taxon>
        <taxon>Xenopus</taxon>
        <taxon>Xenopus</taxon>
    </lineage>
</organism>
<dbReference type="EMBL" id="BC131839">
    <property type="protein sequence ID" value="AAI31840.1"/>
    <property type="molecule type" value="mRNA"/>
</dbReference>
<dbReference type="RefSeq" id="NP_001091294.1">
    <property type="nucleotide sequence ID" value="NM_001097825.1"/>
</dbReference>
<dbReference type="SMR" id="A2RRT3"/>
<dbReference type="DNASU" id="100037115"/>
<dbReference type="GeneID" id="100037115"/>
<dbReference type="KEGG" id="xla:100037115"/>
<dbReference type="AGR" id="Xenbase:XB-GENE-953640"/>
<dbReference type="CTD" id="100037115"/>
<dbReference type="Xenbase" id="XB-GENE-953640">
    <property type="gene designation" value="fbxo31.S"/>
</dbReference>
<dbReference type="OrthoDB" id="722566at2759"/>
<dbReference type="UniPathway" id="UPA00143"/>
<dbReference type="Proteomes" id="UP000186698">
    <property type="component" value="Chromosome 4S"/>
</dbReference>
<dbReference type="Bgee" id="100037115">
    <property type="expression patterns" value="Expressed in heart and 19 other cell types or tissues"/>
</dbReference>
<dbReference type="GO" id="GO:0005737">
    <property type="term" value="C:cytoplasm"/>
    <property type="evidence" value="ECO:0000250"/>
    <property type="project" value="UniProtKB"/>
</dbReference>
<dbReference type="GO" id="GO:0019005">
    <property type="term" value="C:SCF ubiquitin ligase complex"/>
    <property type="evidence" value="ECO:0000250"/>
    <property type="project" value="UniProtKB"/>
</dbReference>
<dbReference type="GO" id="GO:1990756">
    <property type="term" value="F:ubiquitin-like ligase-substrate adaptor activity"/>
    <property type="evidence" value="ECO:0000250"/>
    <property type="project" value="UniProtKB"/>
</dbReference>
<dbReference type="GO" id="GO:0031145">
    <property type="term" value="P:anaphase-promoting complex-dependent catabolic process"/>
    <property type="evidence" value="ECO:0000250"/>
    <property type="project" value="UniProtKB"/>
</dbReference>
<dbReference type="GO" id="GO:0034599">
    <property type="term" value="P:cellular response to oxidative stress"/>
    <property type="evidence" value="ECO:0000250"/>
    <property type="project" value="UniProtKB"/>
</dbReference>
<dbReference type="GO" id="GO:0006974">
    <property type="term" value="P:DNA damage response"/>
    <property type="evidence" value="ECO:0000250"/>
    <property type="project" value="UniProtKB"/>
</dbReference>
<dbReference type="GO" id="GO:0031571">
    <property type="term" value="P:mitotic G1 DNA damage checkpoint signaling"/>
    <property type="evidence" value="ECO:0000250"/>
    <property type="project" value="UniProtKB"/>
</dbReference>
<dbReference type="GO" id="GO:0043161">
    <property type="term" value="P:proteasome-mediated ubiquitin-dependent protein catabolic process"/>
    <property type="evidence" value="ECO:0000250"/>
    <property type="project" value="UniProtKB"/>
</dbReference>
<dbReference type="GO" id="GO:0016567">
    <property type="term" value="P:protein ubiquitination"/>
    <property type="evidence" value="ECO:0007669"/>
    <property type="project" value="UniProtKB-UniPathway"/>
</dbReference>
<dbReference type="GO" id="GO:0031146">
    <property type="term" value="P:SCF-dependent proteasomal ubiquitin-dependent protein catabolic process"/>
    <property type="evidence" value="ECO:0000250"/>
    <property type="project" value="UniProtKB"/>
</dbReference>
<dbReference type="CDD" id="cd22102">
    <property type="entry name" value="F-box_FBXO31"/>
    <property type="match status" value="1"/>
</dbReference>
<dbReference type="FunFam" id="1.20.1280.50:FF:000033">
    <property type="entry name" value="F-box only protein 31"/>
    <property type="match status" value="1"/>
</dbReference>
<dbReference type="Gene3D" id="1.20.1280.50">
    <property type="match status" value="1"/>
</dbReference>
<dbReference type="InterPro" id="IPR036047">
    <property type="entry name" value="F-box-like_dom_sf"/>
</dbReference>
<dbReference type="InterPro" id="IPR001810">
    <property type="entry name" value="F-box_dom"/>
</dbReference>
<dbReference type="InterPro" id="IPR045048">
    <property type="entry name" value="FBXO31/39"/>
</dbReference>
<dbReference type="PANTHER" id="PTHR10706">
    <property type="entry name" value="F-BOX FAMILY PROTEIN"/>
    <property type="match status" value="1"/>
</dbReference>
<dbReference type="PANTHER" id="PTHR10706:SF130">
    <property type="entry name" value="F-BOX ONLY PROTEIN 31"/>
    <property type="match status" value="1"/>
</dbReference>
<dbReference type="Pfam" id="PF12014">
    <property type="entry name" value="Cyclin_D1_bind"/>
    <property type="match status" value="1"/>
</dbReference>
<dbReference type="Pfam" id="PF12937">
    <property type="entry name" value="F-box-like"/>
    <property type="match status" value="1"/>
</dbReference>
<dbReference type="SMART" id="SM00256">
    <property type="entry name" value="FBOX"/>
    <property type="match status" value="1"/>
</dbReference>
<dbReference type="SUPFAM" id="SSF81383">
    <property type="entry name" value="F-box domain"/>
    <property type="match status" value="1"/>
</dbReference>
<dbReference type="PROSITE" id="PS50181">
    <property type="entry name" value="FBOX"/>
    <property type="match status" value="1"/>
</dbReference>
<feature type="chain" id="PRO_0000378164" description="F-box only protein 31-A">
    <location>
        <begin position="1"/>
        <end position="519"/>
    </location>
</feature>
<feature type="domain" description="F-box" evidence="3">
    <location>
        <begin position="54"/>
        <end position="100"/>
    </location>
</feature>
<feature type="region of interest" description="Disordered" evidence="4">
    <location>
        <begin position="11"/>
        <end position="37"/>
    </location>
</feature>
<feature type="region of interest" description="Disordered" evidence="4">
    <location>
        <begin position="369"/>
        <end position="424"/>
    </location>
</feature>
<feature type="compositionally biased region" description="Basic and acidic residues" evidence="4">
    <location>
        <begin position="369"/>
        <end position="390"/>
    </location>
</feature>
<feature type="binding site" evidence="2">
    <location>
        <position position="196"/>
    </location>
    <ligand>
        <name>Zn(2+)</name>
        <dbReference type="ChEBI" id="CHEBI:29105"/>
    </ligand>
</feature>
<feature type="binding site" evidence="2">
    <location>
        <position position="204"/>
    </location>
    <ligand>
        <name>Zn(2+)</name>
        <dbReference type="ChEBI" id="CHEBI:29105"/>
    </ligand>
</feature>
<feature type="binding site" evidence="2">
    <location>
        <position position="220"/>
    </location>
    <ligand>
        <name>Zn(2+)</name>
        <dbReference type="ChEBI" id="CHEBI:29105"/>
    </ligand>
</feature>
<feature type="binding site" evidence="2">
    <location>
        <position position="226"/>
    </location>
    <ligand>
        <name>Zn(2+)</name>
        <dbReference type="ChEBI" id="CHEBI:29105"/>
    </ligand>
</feature>
<accession>A2RRT3</accession>